<accession>Q2JJ17</accession>
<name>RPOC2_SYNJB</name>
<feature type="chain" id="PRO_0000353537" description="DNA-directed RNA polymerase subunit beta'">
    <location>
        <begin position="1"/>
        <end position="1304"/>
    </location>
</feature>
<feature type="region of interest" description="Disordered" evidence="2">
    <location>
        <begin position="1"/>
        <end position="23"/>
    </location>
</feature>
<feature type="region of interest" description="Disordered" evidence="2">
    <location>
        <begin position="1256"/>
        <end position="1304"/>
    </location>
</feature>
<feature type="compositionally biased region" description="Acidic residues" evidence="2">
    <location>
        <begin position="1256"/>
        <end position="1268"/>
    </location>
</feature>
<feature type="compositionally biased region" description="Low complexity" evidence="2">
    <location>
        <begin position="1269"/>
        <end position="1278"/>
    </location>
</feature>
<feature type="compositionally biased region" description="Acidic residues" evidence="2">
    <location>
        <begin position="1294"/>
        <end position="1304"/>
    </location>
</feature>
<feature type="binding site" evidence="1">
    <location>
        <position position="241"/>
    </location>
    <ligand>
        <name>Zn(2+)</name>
        <dbReference type="ChEBI" id="CHEBI:29105"/>
    </ligand>
</feature>
<feature type="binding site" evidence="1">
    <location>
        <position position="315"/>
    </location>
    <ligand>
        <name>Zn(2+)</name>
        <dbReference type="ChEBI" id="CHEBI:29105"/>
    </ligand>
</feature>
<feature type="binding site" evidence="1">
    <location>
        <position position="322"/>
    </location>
    <ligand>
        <name>Zn(2+)</name>
        <dbReference type="ChEBI" id="CHEBI:29105"/>
    </ligand>
</feature>
<feature type="binding site" evidence="1">
    <location>
        <position position="325"/>
    </location>
    <ligand>
        <name>Zn(2+)</name>
        <dbReference type="ChEBI" id="CHEBI:29105"/>
    </ligand>
</feature>
<reference key="1">
    <citation type="journal article" date="2007" name="ISME J.">
        <title>Population level functional diversity in a microbial community revealed by comparative genomic and metagenomic analyses.</title>
        <authorList>
            <person name="Bhaya D."/>
            <person name="Grossman A.R."/>
            <person name="Steunou A.-S."/>
            <person name="Khuri N."/>
            <person name="Cohan F.M."/>
            <person name="Hamamura N."/>
            <person name="Melendrez M.C."/>
            <person name="Bateson M.M."/>
            <person name="Ward D.M."/>
            <person name="Heidelberg J.F."/>
        </authorList>
    </citation>
    <scope>NUCLEOTIDE SEQUENCE [LARGE SCALE GENOMIC DNA]</scope>
    <source>
        <strain>JA-2-3B'a(2-13)</strain>
    </source>
</reference>
<protein>
    <recommendedName>
        <fullName evidence="1">DNA-directed RNA polymerase subunit beta'</fullName>
        <shortName evidence="1">RNAP subunit beta'</shortName>
        <ecNumber evidence="1">2.7.7.6</ecNumber>
    </recommendedName>
    <alternativeName>
        <fullName evidence="1">RNA polymerase subunit beta'</fullName>
    </alternativeName>
    <alternativeName>
        <fullName evidence="1">Transcriptase subunit beta'</fullName>
    </alternativeName>
</protein>
<evidence type="ECO:0000255" key="1">
    <source>
        <dbReference type="HAMAP-Rule" id="MF_01324"/>
    </source>
</evidence>
<evidence type="ECO:0000256" key="2">
    <source>
        <dbReference type="SAM" id="MobiDB-lite"/>
    </source>
</evidence>
<gene>
    <name evidence="1" type="primary">rpoC2</name>
    <name type="ordered locus">CYB_2438</name>
</gene>
<dbReference type="EC" id="2.7.7.6" evidence="1"/>
<dbReference type="EMBL" id="CP000240">
    <property type="protein sequence ID" value="ABD03372.1"/>
    <property type="molecule type" value="Genomic_DNA"/>
</dbReference>
<dbReference type="SMR" id="Q2JJ17"/>
<dbReference type="STRING" id="321332.CYB_2438"/>
<dbReference type="KEGG" id="cyb:CYB_2438"/>
<dbReference type="eggNOG" id="COG0086">
    <property type="taxonomic scope" value="Bacteria"/>
</dbReference>
<dbReference type="HOGENOM" id="CLU_000524_1_0_3"/>
<dbReference type="OrthoDB" id="9815296at2"/>
<dbReference type="Proteomes" id="UP000001938">
    <property type="component" value="Chromosome"/>
</dbReference>
<dbReference type="GO" id="GO:0000428">
    <property type="term" value="C:DNA-directed RNA polymerase complex"/>
    <property type="evidence" value="ECO:0007669"/>
    <property type="project" value="UniProtKB-KW"/>
</dbReference>
<dbReference type="GO" id="GO:0003677">
    <property type="term" value="F:DNA binding"/>
    <property type="evidence" value="ECO:0007669"/>
    <property type="project" value="UniProtKB-UniRule"/>
</dbReference>
<dbReference type="GO" id="GO:0003899">
    <property type="term" value="F:DNA-directed RNA polymerase activity"/>
    <property type="evidence" value="ECO:0007669"/>
    <property type="project" value="UniProtKB-UniRule"/>
</dbReference>
<dbReference type="GO" id="GO:0008270">
    <property type="term" value="F:zinc ion binding"/>
    <property type="evidence" value="ECO:0007669"/>
    <property type="project" value="UniProtKB-UniRule"/>
</dbReference>
<dbReference type="GO" id="GO:0006351">
    <property type="term" value="P:DNA-templated transcription"/>
    <property type="evidence" value="ECO:0007669"/>
    <property type="project" value="UniProtKB-UniRule"/>
</dbReference>
<dbReference type="CDD" id="cd02655">
    <property type="entry name" value="RNAP_beta'_C"/>
    <property type="match status" value="1"/>
</dbReference>
<dbReference type="FunFam" id="1.10.150.390:FF:000002">
    <property type="entry name" value="DNA-directed RNA polymerase subunit beta"/>
    <property type="match status" value="1"/>
</dbReference>
<dbReference type="Gene3D" id="1.10.132.30">
    <property type="match status" value="1"/>
</dbReference>
<dbReference type="Gene3D" id="1.10.150.390">
    <property type="match status" value="1"/>
</dbReference>
<dbReference type="Gene3D" id="1.10.1790.20">
    <property type="match status" value="1"/>
</dbReference>
<dbReference type="Gene3D" id="2.40.50.100">
    <property type="match status" value="3"/>
</dbReference>
<dbReference type="Gene3D" id="1.10.274.100">
    <property type="entry name" value="RNA polymerase Rpb1, domain 3"/>
    <property type="match status" value="1"/>
</dbReference>
<dbReference type="HAMAP" id="MF_01324">
    <property type="entry name" value="RNApol_bact_RpoC2"/>
    <property type="match status" value="1"/>
</dbReference>
<dbReference type="InterPro" id="IPR012756">
    <property type="entry name" value="DNA-dir_RpoC2_beta_pp"/>
</dbReference>
<dbReference type="InterPro" id="IPR045867">
    <property type="entry name" value="DNA-dir_RpoC_beta_prime"/>
</dbReference>
<dbReference type="InterPro" id="IPR007066">
    <property type="entry name" value="RNA_pol_Rpb1_3"/>
</dbReference>
<dbReference type="InterPro" id="IPR042102">
    <property type="entry name" value="RNA_pol_Rpb1_3_sf"/>
</dbReference>
<dbReference type="InterPro" id="IPR007083">
    <property type="entry name" value="RNA_pol_Rpb1_4"/>
</dbReference>
<dbReference type="InterPro" id="IPR007081">
    <property type="entry name" value="RNA_pol_Rpb1_5"/>
</dbReference>
<dbReference type="InterPro" id="IPR038120">
    <property type="entry name" value="Rpb1_funnel_sf"/>
</dbReference>
<dbReference type="NCBIfam" id="NF002724">
    <property type="entry name" value="PRK02597.1"/>
    <property type="match status" value="1"/>
</dbReference>
<dbReference type="NCBIfam" id="TIGR02388">
    <property type="entry name" value="rpoC2_cyan"/>
    <property type="match status" value="1"/>
</dbReference>
<dbReference type="PANTHER" id="PTHR19376">
    <property type="entry name" value="DNA-DIRECTED RNA POLYMERASE"/>
    <property type="match status" value="1"/>
</dbReference>
<dbReference type="PANTHER" id="PTHR19376:SF68">
    <property type="entry name" value="DNA-DIRECTED RNA POLYMERASE SUBUNIT BETA"/>
    <property type="match status" value="1"/>
</dbReference>
<dbReference type="Pfam" id="PF04983">
    <property type="entry name" value="RNA_pol_Rpb1_3"/>
    <property type="match status" value="1"/>
</dbReference>
<dbReference type="Pfam" id="PF05000">
    <property type="entry name" value="RNA_pol_Rpb1_4"/>
    <property type="match status" value="1"/>
</dbReference>
<dbReference type="Pfam" id="PF04998">
    <property type="entry name" value="RNA_pol_Rpb1_5"/>
    <property type="match status" value="2"/>
</dbReference>
<dbReference type="SUPFAM" id="SSF64484">
    <property type="entry name" value="beta and beta-prime subunits of DNA dependent RNA-polymerase"/>
    <property type="match status" value="1"/>
</dbReference>
<organism>
    <name type="scientific">Synechococcus sp. (strain JA-2-3B'a(2-13))</name>
    <name type="common">Cyanobacteria bacterium Yellowstone B-Prime</name>
    <dbReference type="NCBI Taxonomy" id="321332"/>
    <lineage>
        <taxon>Bacteria</taxon>
        <taxon>Bacillati</taxon>
        <taxon>Cyanobacteriota</taxon>
        <taxon>Cyanophyceae</taxon>
        <taxon>Synechococcales</taxon>
        <taxon>Synechococcaceae</taxon>
        <taxon>Synechococcus</taxon>
    </lineage>
</organism>
<sequence>MSEKGRFSAGLSRQAADGNKADAPLPPVPFRNYQIGKKELRNLIAWSFARYGTARTAQMADALKTLGFKYATQAAVSISVEDLRVPPSKRQLLAQAEAEIEAATERYTRGEITEVERYQKVIDTWNQINDQIKEEMLNNFRQNDPLNSVYMMANSGARGNVSQVRQLVGMRGLMANPQGRIIDLPIKTNFREGLTVTEYIISSYGARKGLVDTALRTADSGYLTRRLVDVSQDVIVRESDCGTEQGILLEYLMDGDKVVVSLEERLVGRVLARDVVHPQTQEILARRNQEVDHDLARTIAEAGIRQVMVRSPLTCEANRSVCRMCYGWSLAHSRLVDLGEAVGIIAAQSIGEPGTQLTMRTFHTGGVFTGEVARQIRAPFAGVVRFPKNLRTRPFRTRHGDDALQVEVNNQIILEGPDGQRESFDMTQGSTLLVRDGAQVQRDQLIAEVSLAKASRKSTEKAQKEVVADLAGEIRFADLPIEEKTDRQGNTTYTAQRQGLIWVMSGQVYNLPPGAEPVVKNGDRVQAGDVIAETSLVTEHGGIVRLPERSDTRSGREVEIINASVVLREARVRVESHQGREQFLLDTSSGQTFVLKATPGTKVGNDEVVAELIDNHFRSQTGGLVKFAGIEVARRGKAKQGYEVIQGGTLLWIPEETHEVNKDISLLNVDDGQYVEAGTEVVKDIFCQNAGVVEVIQKNDILREIVIKPGSLHLVDNPADLEVKSGTLIQPGQPVLSSIVPDRLVYLEHVETPEGPGLLLRPVQEYEIPDRPLVPTQESTSESGRSIRLRAVQRVPFKDGERVKSVGPVELLRTQLVLEIDTDAPQLKADIELIQDEKDPDIRRLQLVILETLLLRRDVEADLTQGSTHTRLLVKEGDSIASGDVIARTEIQAKKAGIVQGIREGAEVVRRVLVITDDDLVQVPLTGPANVEVGALVRVGDELAPGIPSPQSGQVMQITDGQVLLRMARPYLVSAGAILQVRNGDLVQRGDSLALLVFERAKTGDIIQGLPRIEELLEARKPKEMCVLAKRPGTVQLSWRGEEPDLKVIEADGTVRDYSVLPGQSLIVVDGQPVGVGDPLTDGPANPHDLLEIYYEYHRQTLGDDQAARLALREVQRFFVNEVQNVYRSQGVEISDKHIEIVVRQMTSKVRVDDGGDTILLPGELVELREIQQINATMAITGGAPAKYTPVLLGITKASLNTDSFISAASFQETTRVLTEAAIEGKSDWLRGLKENVIIGRLIPAGTGFTTYEEIAAEPEPDEEEEEPAVLPELPPRLILEDDQLIDDSTPAFDELEEDDDEEE</sequence>
<keyword id="KW-0240">DNA-directed RNA polymerase</keyword>
<keyword id="KW-0479">Metal-binding</keyword>
<keyword id="KW-0548">Nucleotidyltransferase</keyword>
<keyword id="KW-1185">Reference proteome</keyword>
<keyword id="KW-0804">Transcription</keyword>
<keyword id="KW-0808">Transferase</keyword>
<keyword id="KW-0862">Zinc</keyword>
<proteinExistence type="inferred from homology"/>
<comment type="function">
    <text evidence="1">DNA-dependent RNA polymerase catalyzes the transcription of DNA into RNA using the four ribonucleoside triphosphates as substrates.</text>
</comment>
<comment type="catalytic activity">
    <reaction evidence="1">
        <text>RNA(n) + a ribonucleoside 5'-triphosphate = RNA(n+1) + diphosphate</text>
        <dbReference type="Rhea" id="RHEA:21248"/>
        <dbReference type="Rhea" id="RHEA-COMP:14527"/>
        <dbReference type="Rhea" id="RHEA-COMP:17342"/>
        <dbReference type="ChEBI" id="CHEBI:33019"/>
        <dbReference type="ChEBI" id="CHEBI:61557"/>
        <dbReference type="ChEBI" id="CHEBI:140395"/>
        <dbReference type="EC" id="2.7.7.6"/>
    </reaction>
</comment>
<comment type="cofactor">
    <cofactor evidence="1">
        <name>Zn(2+)</name>
        <dbReference type="ChEBI" id="CHEBI:29105"/>
    </cofactor>
    <text evidence="1">Binds 1 Zn(2+) ion per subunit.</text>
</comment>
<comment type="subunit">
    <text evidence="1">In cyanobacteria the RNAP catalytic core is composed of 2 alpha, 1 beta, 1 beta', 1 gamma and 1 omega subunit. When a sigma factor is associated with the core the holoenzyme is formed, which can initiate transcription.</text>
</comment>
<comment type="similarity">
    <text evidence="1">Belongs to the RNA polymerase beta' chain family. RpoC2 subfamily.</text>
</comment>